<protein>
    <recommendedName>
        <fullName evidence="1">GTPase Der</fullName>
    </recommendedName>
    <alternativeName>
        <fullName evidence="1">GTP-binding protein EngA</fullName>
    </alternativeName>
</protein>
<reference key="1">
    <citation type="journal article" date="2008" name="PLoS ONE">
        <title>Environmental adaptation: genomic analysis of the piezotolerant and psychrotolerant deep-sea iron reducing bacterium Shewanella piezotolerans WP3.</title>
        <authorList>
            <person name="Wang F."/>
            <person name="Wang J."/>
            <person name="Jian H."/>
            <person name="Zhang B."/>
            <person name="Li S."/>
            <person name="Wang F."/>
            <person name="Zeng X."/>
            <person name="Gao L."/>
            <person name="Bartlett D.H."/>
            <person name="Yu J."/>
            <person name="Hu S."/>
            <person name="Xiao X."/>
        </authorList>
    </citation>
    <scope>NUCLEOTIDE SEQUENCE [LARGE SCALE GENOMIC DNA]</scope>
    <source>
        <strain>WP3 / JCM 13877</strain>
    </source>
</reference>
<gene>
    <name evidence="1" type="primary">der</name>
    <name type="synonym">engA</name>
    <name type="ordered locus">swp_1455</name>
</gene>
<sequence>MIPVVALVGRPNVGKSTLFNRLTRTRDALVADFPGLTRDRKYGRAHLAGYEFIVVDTGGIDGTEEGIETRMAEQSLAAIEEADVVLFMTDARAGLTAADLAIAQHLRSREKTTFVVANKVDGIDADSACAEFWSLGLGEVYQMAAAQGRGVTNMIEYSLAPYAEAMGITKDGEGEESEEEREYTEEEAEAEQKRLQDLPIKLAIIGKPNVGKSTLTNRILGEERVVVYDEPGTTRDSIYIPMEREGREYVLIDTAGVRRRSKVHETVEKFSVIKTLKAVEDCNVVLLIIDAREGIAEQDLGLLGFALNAGRALVIAVNKWDGIDQEVKDRVKSELDRRLGFIDFARIHFISALHGTGVGHLYESIEEAYDSATRRVSTSMLTRIMQMAQDDHQPPLVNGRRVKLKYAHAGGYNPPIVVVHGNQVKKLPDSYKRFMMNYYRRSLKVIGTPIQIRFQDGGNPFEGMNTKKLTVSQERRRKRMVGHIRDKNKD</sequence>
<name>DER_SHEPW</name>
<evidence type="ECO:0000255" key="1">
    <source>
        <dbReference type="HAMAP-Rule" id="MF_00195"/>
    </source>
</evidence>
<feature type="chain" id="PRO_1000118651" description="GTPase Der">
    <location>
        <begin position="1"/>
        <end position="490"/>
    </location>
</feature>
<feature type="domain" description="EngA-type G 1">
    <location>
        <begin position="3"/>
        <end position="166"/>
    </location>
</feature>
<feature type="domain" description="EngA-type G 2">
    <location>
        <begin position="200"/>
        <end position="373"/>
    </location>
</feature>
<feature type="domain" description="KH-like" evidence="1">
    <location>
        <begin position="374"/>
        <end position="458"/>
    </location>
</feature>
<feature type="binding site" evidence="1">
    <location>
        <begin position="9"/>
        <end position="16"/>
    </location>
    <ligand>
        <name>GTP</name>
        <dbReference type="ChEBI" id="CHEBI:37565"/>
        <label>1</label>
    </ligand>
</feature>
<feature type="binding site" evidence="1">
    <location>
        <begin position="56"/>
        <end position="60"/>
    </location>
    <ligand>
        <name>GTP</name>
        <dbReference type="ChEBI" id="CHEBI:37565"/>
        <label>1</label>
    </ligand>
</feature>
<feature type="binding site" evidence="1">
    <location>
        <begin position="118"/>
        <end position="121"/>
    </location>
    <ligand>
        <name>GTP</name>
        <dbReference type="ChEBI" id="CHEBI:37565"/>
        <label>1</label>
    </ligand>
</feature>
<feature type="binding site" evidence="1">
    <location>
        <begin position="206"/>
        <end position="213"/>
    </location>
    <ligand>
        <name>GTP</name>
        <dbReference type="ChEBI" id="CHEBI:37565"/>
        <label>2</label>
    </ligand>
</feature>
<feature type="binding site" evidence="1">
    <location>
        <begin position="253"/>
        <end position="257"/>
    </location>
    <ligand>
        <name>GTP</name>
        <dbReference type="ChEBI" id="CHEBI:37565"/>
        <label>2</label>
    </ligand>
</feature>
<feature type="binding site" evidence="1">
    <location>
        <begin position="318"/>
        <end position="321"/>
    </location>
    <ligand>
        <name>GTP</name>
        <dbReference type="ChEBI" id="CHEBI:37565"/>
        <label>2</label>
    </ligand>
</feature>
<accession>B8CKR5</accession>
<organism>
    <name type="scientific">Shewanella piezotolerans (strain WP3 / JCM 13877)</name>
    <dbReference type="NCBI Taxonomy" id="225849"/>
    <lineage>
        <taxon>Bacteria</taxon>
        <taxon>Pseudomonadati</taxon>
        <taxon>Pseudomonadota</taxon>
        <taxon>Gammaproteobacteria</taxon>
        <taxon>Alteromonadales</taxon>
        <taxon>Shewanellaceae</taxon>
        <taxon>Shewanella</taxon>
    </lineage>
</organism>
<proteinExistence type="inferred from homology"/>
<dbReference type="EMBL" id="CP000472">
    <property type="protein sequence ID" value="ACJ28241.1"/>
    <property type="molecule type" value="Genomic_DNA"/>
</dbReference>
<dbReference type="RefSeq" id="WP_020911619.1">
    <property type="nucleotide sequence ID" value="NC_011566.1"/>
</dbReference>
<dbReference type="SMR" id="B8CKR5"/>
<dbReference type="STRING" id="225849.swp_1455"/>
<dbReference type="KEGG" id="swp:swp_1455"/>
<dbReference type="eggNOG" id="COG1160">
    <property type="taxonomic scope" value="Bacteria"/>
</dbReference>
<dbReference type="HOGENOM" id="CLU_016077_6_2_6"/>
<dbReference type="OrthoDB" id="9805918at2"/>
<dbReference type="Proteomes" id="UP000000753">
    <property type="component" value="Chromosome"/>
</dbReference>
<dbReference type="GO" id="GO:0005525">
    <property type="term" value="F:GTP binding"/>
    <property type="evidence" value="ECO:0007669"/>
    <property type="project" value="UniProtKB-UniRule"/>
</dbReference>
<dbReference type="GO" id="GO:0043022">
    <property type="term" value="F:ribosome binding"/>
    <property type="evidence" value="ECO:0007669"/>
    <property type="project" value="TreeGrafter"/>
</dbReference>
<dbReference type="GO" id="GO:0042254">
    <property type="term" value="P:ribosome biogenesis"/>
    <property type="evidence" value="ECO:0007669"/>
    <property type="project" value="UniProtKB-KW"/>
</dbReference>
<dbReference type="CDD" id="cd01894">
    <property type="entry name" value="EngA1"/>
    <property type="match status" value="1"/>
</dbReference>
<dbReference type="CDD" id="cd01895">
    <property type="entry name" value="EngA2"/>
    <property type="match status" value="1"/>
</dbReference>
<dbReference type="FunFam" id="3.30.300.20:FF:000004">
    <property type="entry name" value="GTPase Der"/>
    <property type="match status" value="1"/>
</dbReference>
<dbReference type="FunFam" id="3.40.50.300:FF:000040">
    <property type="entry name" value="GTPase Der"/>
    <property type="match status" value="1"/>
</dbReference>
<dbReference type="FunFam" id="3.40.50.300:FF:000057">
    <property type="entry name" value="GTPase Der"/>
    <property type="match status" value="1"/>
</dbReference>
<dbReference type="Gene3D" id="3.30.300.20">
    <property type="match status" value="1"/>
</dbReference>
<dbReference type="Gene3D" id="3.40.50.300">
    <property type="entry name" value="P-loop containing nucleotide triphosphate hydrolases"/>
    <property type="match status" value="2"/>
</dbReference>
<dbReference type="HAMAP" id="MF_00195">
    <property type="entry name" value="GTPase_Der"/>
    <property type="match status" value="1"/>
</dbReference>
<dbReference type="InterPro" id="IPR031166">
    <property type="entry name" value="G_ENGA"/>
</dbReference>
<dbReference type="InterPro" id="IPR006073">
    <property type="entry name" value="GTP-bd"/>
</dbReference>
<dbReference type="InterPro" id="IPR016484">
    <property type="entry name" value="GTPase_Der"/>
</dbReference>
<dbReference type="InterPro" id="IPR032859">
    <property type="entry name" value="KH_dom-like"/>
</dbReference>
<dbReference type="InterPro" id="IPR015946">
    <property type="entry name" value="KH_dom-like_a/b"/>
</dbReference>
<dbReference type="InterPro" id="IPR027417">
    <property type="entry name" value="P-loop_NTPase"/>
</dbReference>
<dbReference type="InterPro" id="IPR005225">
    <property type="entry name" value="Small_GTP-bd"/>
</dbReference>
<dbReference type="NCBIfam" id="TIGR03594">
    <property type="entry name" value="GTPase_EngA"/>
    <property type="match status" value="1"/>
</dbReference>
<dbReference type="NCBIfam" id="TIGR00231">
    <property type="entry name" value="small_GTP"/>
    <property type="match status" value="2"/>
</dbReference>
<dbReference type="PANTHER" id="PTHR43834">
    <property type="entry name" value="GTPASE DER"/>
    <property type="match status" value="1"/>
</dbReference>
<dbReference type="PANTHER" id="PTHR43834:SF6">
    <property type="entry name" value="GTPASE DER"/>
    <property type="match status" value="1"/>
</dbReference>
<dbReference type="Pfam" id="PF14714">
    <property type="entry name" value="KH_dom-like"/>
    <property type="match status" value="1"/>
</dbReference>
<dbReference type="Pfam" id="PF01926">
    <property type="entry name" value="MMR_HSR1"/>
    <property type="match status" value="2"/>
</dbReference>
<dbReference type="PIRSF" id="PIRSF006485">
    <property type="entry name" value="GTP-binding_EngA"/>
    <property type="match status" value="1"/>
</dbReference>
<dbReference type="PRINTS" id="PR00326">
    <property type="entry name" value="GTP1OBG"/>
</dbReference>
<dbReference type="SUPFAM" id="SSF52540">
    <property type="entry name" value="P-loop containing nucleoside triphosphate hydrolases"/>
    <property type="match status" value="2"/>
</dbReference>
<dbReference type="PROSITE" id="PS51712">
    <property type="entry name" value="G_ENGA"/>
    <property type="match status" value="2"/>
</dbReference>
<keyword id="KW-0342">GTP-binding</keyword>
<keyword id="KW-0547">Nucleotide-binding</keyword>
<keyword id="KW-0677">Repeat</keyword>
<keyword id="KW-0690">Ribosome biogenesis</keyword>
<comment type="function">
    <text evidence="1">GTPase that plays an essential role in the late steps of ribosome biogenesis.</text>
</comment>
<comment type="subunit">
    <text evidence="1">Associates with the 50S ribosomal subunit.</text>
</comment>
<comment type="similarity">
    <text evidence="1">Belongs to the TRAFAC class TrmE-Era-EngA-EngB-Septin-like GTPase superfamily. EngA (Der) GTPase family.</text>
</comment>